<keyword id="KW-0997">Cell inner membrane</keyword>
<keyword id="KW-1003">Cell membrane</keyword>
<keyword id="KW-0472">Membrane</keyword>
<keyword id="KW-0812">Transmembrane</keyword>
<keyword id="KW-1133">Transmembrane helix</keyword>
<keyword id="KW-0813">Transport</keyword>
<proteinExistence type="inferred from homology"/>
<dbReference type="EMBL" id="CU928160">
    <property type="protein sequence ID" value="CAQ97802.1"/>
    <property type="molecule type" value="Genomic_DNA"/>
</dbReference>
<dbReference type="RefSeq" id="WP_000109289.1">
    <property type="nucleotide sequence ID" value="NC_011741.1"/>
</dbReference>
<dbReference type="SMR" id="B7M826"/>
<dbReference type="KEGG" id="ecr:ECIAI1_0938"/>
<dbReference type="HOGENOM" id="CLU_035018_1_2_6"/>
<dbReference type="GO" id="GO:0005886">
    <property type="term" value="C:plasma membrane"/>
    <property type="evidence" value="ECO:0007669"/>
    <property type="project" value="UniProtKB-SubCell"/>
</dbReference>
<dbReference type="GO" id="GO:0022857">
    <property type="term" value="F:transmembrane transporter activity"/>
    <property type="evidence" value="ECO:0007669"/>
    <property type="project" value="UniProtKB-UniRule"/>
</dbReference>
<dbReference type="CDD" id="cd17477">
    <property type="entry name" value="MFS_YcaD_like"/>
    <property type="match status" value="1"/>
</dbReference>
<dbReference type="FunFam" id="1.20.1250.20:FF:000041">
    <property type="entry name" value="Uncharacterized MFS-type transporter YcaD"/>
    <property type="match status" value="1"/>
</dbReference>
<dbReference type="FunFam" id="1.20.1250.20:FF:000066">
    <property type="entry name" value="Uncharacterized MFS-type transporter YcaD"/>
    <property type="match status" value="1"/>
</dbReference>
<dbReference type="Gene3D" id="1.20.1250.20">
    <property type="entry name" value="MFS general substrate transporter like domains"/>
    <property type="match status" value="2"/>
</dbReference>
<dbReference type="HAMAP" id="MF_01149">
    <property type="entry name" value="MFS_YcaD"/>
    <property type="match status" value="1"/>
</dbReference>
<dbReference type="InterPro" id="IPR011701">
    <property type="entry name" value="MFS"/>
</dbReference>
<dbReference type="InterPro" id="IPR020846">
    <property type="entry name" value="MFS_dom"/>
</dbReference>
<dbReference type="InterPro" id="IPR036259">
    <property type="entry name" value="MFS_trans_sf"/>
</dbReference>
<dbReference type="InterPro" id="IPR023745">
    <property type="entry name" value="MFS_YcaD"/>
</dbReference>
<dbReference type="InterPro" id="IPR047200">
    <property type="entry name" value="MFS_YcaD-like"/>
</dbReference>
<dbReference type="NCBIfam" id="NF002962">
    <property type="entry name" value="PRK03633.1"/>
    <property type="match status" value="1"/>
</dbReference>
<dbReference type="PANTHER" id="PTHR23521">
    <property type="entry name" value="TRANSPORTER MFS SUPERFAMILY"/>
    <property type="match status" value="1"/>
</dbReference>
<dbReference type="PANTHER" id="PTHR23521:SF2">
    <property type="entry name" value="TRANSPORTER MFS SUPERFAMILY"/>
    <property type="match status" value="1"/>
</dbReference>
<dbReference type="Pfam" id="PF07690">
    <property type="entry name" value="MFS_1"/>
    <property type="match status" value="1"/>
</dbReference>
<dbReference type="SUPFAM" id="SSF103473">
    <property type="entry name" value="MFS general substrate transporter"/>
    <property type="match status" value="1"/>
</dbReference>
<dbReference type="PROSITE" id="PS50850">
    <property type="entry name" value="MFS"/>
    <property type="match status" value="1"/>
</dbReference>
<organism>
    <name type="scientific">Escherichia coli O8 (strain IAI1)</name>
    <dbReference type="NCBI Taxonomy" id="585034"/>
    <lineage>
        <taxon>Bacteria</taxon>
        <taxon>Pseudomonadati</taxon>
        <taxon>Pseudomonadota</taxon>
        <taxon>Gammaproteobacteria</taxon>
        <taxon>Enterobacterales</taxon>
        <taxon>Enterobacteriaceae</taxon>
        <taxon>Escherichia</taxon>
    </lineage>
</organism>
<name>YCAD_ECO8A</name>
<sequence>MSTYTRPVMLLLSGLLLLTLAIAVLNTLVPLWLAQEHMSTWQVGVVSSSYFTGNLVGTLLTGYVIKRIGFNRSYYLASFIFAAGCAGLGLMIGFWSWLAWRFVAGVGCAMIWVVVESALMCSGTSRNRGRLLAAYMMVYYVGTFLGQLLVSKVSTELMSVLPWVTGLTLAGILPLLFTRVLNQQAENHDSTSITAMLKLRQARLGVNGCIISGIVLGSLYGLMPLYLNHKGVSNASIGFWMAVLVSAGILGQWPIGRLADKFGRLLVLRVQVFVVILGSIAMLSQAAMAPALFILGAAGFTLYPVAMAWACEKVEHHQLVAMNQALLLSYTVGSLLGPSFTAMLMQNFSDNLLFIMIASVSFIYLLMLLRNAGHTPKPVAHV</sequence>
<protein>
    <recommendedName>
        <fullName evidence="1">Uncharacterized MFS-type transporter YcaD</fullName>
    </recommendedName>
</protein>
<feature type="chain" id="PRO_1000137486" description="Uncharacterized MFS-type transporter YcaD">
    <location>
        <begin position="1"/>
        <end position="382"/>
    </location>
</feature>
<feature type="transmembrane region" description="Helical" evidence="1">
    <location>
        <begin position="14"/>
        <end position="34"/>
    </location>
</feature>
<feature type="transmembrane region" description="Helical" evidence="1">
    <location>
        <begin position="45"/>
        <end position="65"/>
    </location>
</feature>
<feature type="transmembrane region" description="Helical" evidence="1">
    <location>
        <begin position="79"/>
        <end position="99"/>
    </location>
</feature>
<feature type="transmembrane region" description="Helical" evidence="1">
    <location>
        <begin position="102"/>
        <end position="122"/>
    </location>
</feature>
<feature type="transmembrane region" description="Helical" evidence="1">
    <location>
        <begin position="131"/>
        <end position="151"/>
    </location>
</feature>
<feature type="transmembrane region" description="Helical" evidence="1">
    <location>
        <begin position="157"/>
        <end position="177"/>
    </location>
</feature>
<feature type="transmembrane region" description="Helical" evidence="1">
    <location>
        <begin position="204"/>
        <end position="224"/>
    </location>
</feature>
<feature type="transmembrane region" description="Helical" evidence="1">
    <location>
        <begin position="235"/>
        <end position="255"/>
    </location>
</feature>
<feature type="transmembrane region" description="Helical" evidence="1">
    <location>
        <begin position="270"/>
        <end position="290"/>
    </location>
</feature>
<feature type="transmembrane region" description="Helical" evidence="1">
    <location>
        <begin position="291"/>
        <end position="311"/>
    </location>
</feature>
<feature type="transmembrane region" description="Helical" evidence="1">
    <location>
        <begin position="325"/>
        <end position="345"/>
    </location>
</feature>
<feature type="transmembrane region" description="Helical" evidence="1">
    <location>
        <begin position="348"/>
        <end position="368"/>
    </location>
</feature>
<comment type="subcellular location">
    <subcellularLocation>
        <location evidence="1">Cell inner membrane</location>
        <topology evidence="1">Multi-pass membrane protein</topology>
    </subcellularLocation>
</comment>
<comment type="similarity">
    <text evidence="1">Belongs to the major facilitator superfamily. YcaD (TC 2.A.1.26) family.</text>
</comment>
<evidence type="ECO:0000255" key="1">
    <source>
        <dbReference type="HAMAP-Rule" id="MF_01149"/>
    </source>
</evidence>
<reference key="1">
    <citation type="journal article" date="2009" name="PLoS Genet.">
        <title>Organised genome dynamics in the Escherichia coli species results in highly diverse adaptive paths.</title>
        <authorList>
            <person name="Touchon M."/>
            <person name="Hoede C."/>
            <person name="Tenaillon O."/>
            <person name="Barbe V."/>
            <person name="Baeriswyl S."/>
            <person name="Bidet P."/>
            <person name="Bingen E."/>
            <person name="Bonacorsi S."/>
            <person name="Bouchier C."/>
            <person name="Bouvet O."/>
            <person name="Calteau A."/>
            <person name="Chiapello H."/>
            <person name="Clermont O."/>
            <person name="Cruveiller S."/>
            <person name="Danchin A."/>
            <person name="Diard M."/>
            <person name="Dossat C."/>
            <person name="Karoui M.E."/>
            <person name="Frapy E."/>
            <person name="Garry L."/>
            <person name="Ghigo J.M."/>
            <person name="Gilles A.M."/>
            <person name="Johnson J."/>
            <person name="Le Bouguenec C."/>
            <person name="Lescat M."/>
            <person name="Mangenot S."/>
            <person name="Martinez-Jehanne V."/>
            <person name="Matic I."/>
            <person name="Nassif X."/>
            <person name="Oztas S."/>
            <person name="Petit M.A."/>
            <person name="Pichon C."/>
            <person name="Rouy Z."/>
            <person name="Ruf C.S."/>
            <person name="Schneider D."/>
            <person name="Tourret J."/>
            <person name="Vacherie B."/>
            <person name="Vallenet D."/>
            <person name="Medigue C."/>
            <person name="Rocha E.P.C."/>
            <person name="Denamur E."/>
        </authorList>
    </citation>
    <scope>NUCLEOTIDE SEQUENCE [LARGE SCALE GENOMIC DNA]</scope>
    <source>
        <strain>IAI1</strain>
    </source>
</reference>
<accession>B7M826</accession>
<gene>
    <name evidence="1" type="primary">ycaD</name>
    <name type="ordered locus">ECIAI1_0938</name>
</gene>